<name>NTPPB_PSEPK</name>
<proteinExistence type="inferred from homology"/>
<protein>
    <recommendedName>
        <fullName evidence="1">7-methyl-GTP pyrophosphatase</fullName>
        <shortName evidence="1">m(7)GTP pyrophosphatase</shortName>
        <ecNumber evidence="1">3.6.1.-</ecNumber>
    </recommendedName>
</protein>
<keyword id="KW-0963">Cytoplasm</keyword>
<keyword id="KW-0378">Hydrolase</keyword>
<keyword id="KW-0546">Nucleotide metabolism</keyword>
<keyword id="KW-1185">Reference proteome</keyword>
<comment type="function">
    <text evidence="1">Nucleoside triphosphate pyrophosphatase that hydrolyzes 7-methyl-GTP (m(7)GTP). May have a dual role in cell division arrest and in preventing the incorporation of modified nucleotides into cellular nucleic acids.</text>
</comment>
<comment type="catalytic activity">
    <reaction evidence="1">
        <text>N(7)-methyl-GTP + H2O = N(7)-methyl-GMP + diphosphate + H(+)</text>
        <dbReference type="Rhea" id="RHEA:58744"/>
        <dbReference type="ChEBI" id="CHEBI:15377"/>
        <dbReference type="ChEBI" id="CHEBI:15378"/>
        <dbReference type="ChEBI" id="CHEBI:33019"/>
        <dbReference type="ChEBI" id="CHEBI:58285"/>
        <dbReference type="ChEBI" id="CHEBI:87133"/>
    </reaction>
</comment>
<comment type="cofactor">
    <cofactor evidence="1">
        <name>a divalent metal cation</name>
        <dbReference type="ChEBI" id="CHEBI:60240"/>
    </cofactor>
</comment>
<comment type="subcellular location">
    <subcellularLocation>
        <location evidence="1">Cytoplasm</location>
    </subcellularLocation>
</comment>
<comment type="similarity">
    <text evidence="1">Belongs to the Maf family. YceF subfamily.</text>
</comment>
<comment type="sequence caution" evidence="2">
    <conflict type="erroneous initiation">
        <sequence resource="EMBL-CDS" id="AAN67527"/>
    </conflict>
</comment>
<dbReference type="EC" id="3.6.1.-" evidence="1"/>
<dbReference type="EMBL" id="AE015451">
    <property type="protein sequence ID" value="AAN67527.1"/>
    <property type="status" value="ALT_INIT"/>
    <property type="molecule type" value="Genomic_DNA"/>
</dbReference>
<dbReference type="RefSeq" id="NP_744063.1">
    <property type="nucleotide sequence ID" value="NC_002947.4"/>
</dbReference>
<dbReference type="RefSeq" id="WP_049586855.1">
    <property type="nucleotide sequence ID" value="NZ_CP169744.1"/>
</dbReference>
<dbReference type="SMR" id="Q88LM1"/>
<dbReference type="STRING" id="160488.PP_1909"/>
<dbReference type="PaxDb" id="160488-PP_1909"/>
<dbReference type="KEGG" id="ppu:PP_1909"/>
<dbReference type="PATRIC" id="fig|160488.4.peg.2016"/>
<dbReference type="eggNOG" id="COG0424">
    <property type="taxonomic scope" value="Bacteria"/>
</dbReference>
<dbReference type="HOGENOM" id="CLU_040416_1_0_6"/>
<dbReference type="OrthoDB" id="9813694at2"/>
<dbReference type="PhylomeDB" id="Q88LM1"/>
<dbReference type="Proteomes" id="UP000000556">
    <property type="component" value="Chromosome"/>
</dbReference>
<dbReference type="GO" id="GO:0005737">
    <property type="term" value="C:cytoplasm"/>
    <property type="evidence" value="ECO:0007669"/>
    <property type="project" value="UniProtKB-SubCell"/>
</dbReference>
<dbReference type="GO" id="GO:0047429">
    <property type="term" value="F:nucleoside triphosphate diphosphatase activity"/>
    <property type="evidence" value="ECO:0007669"/>
    <property type="project" value="InterPro"/>
</dbReference>
<dbReference type="GO" id="GO:0009117">
    <property type="term" value="P:nucleotide metabolic process"/>
    <property type="evidence" value="ECO:0007669"/>
    <property type="project" value="UniProtKB-KW"/>
</dbReference>
<dbReference type="CDD" id="cd00555">
    <property type="entry name" value="Maf"/>
    <property type="match status" value="1"/>
</dbReference>
<dbReference type="FunFam" id="3.90.950.10:FF:000005">
    <property type="entry name" value="7-methyl-GTP pyrophosphatase"/>
    <property type="match status" value="1"/>
</dbReference>
<dbReference type="Gene3D" id="3.90.950.10">
    <property type="match status" value="1"/>
</dbReference>
<dbReference type="HAMAP" id="MF_00528">
    <property type="entry name" value="Maf"/>
    <property type="match status" value="1"/>
</dbReference>
<dbReference type="InterPro" id="IPR029001">
    <property type="entry name" value="ITPase-like_fam"/>
</dbReference>
<dbReference type="InterPro" id="IPR003697">
    <property type="entry name" value="Maf-like"/>
</dbReference>
<dbReference type="NCBIfam" id="TIGR00172">
    <property type="entry name" value="maf"/>
    <property type="match status" value="1"/>
</dbReference>
<dbReference type="PANTHER" id="PTHR43213:SF10">
    <property type="entry name" value="7-METHYL-GTP PYROPHOSPHATASE"/>
    <property type="match status" value="1"/>
</dbReference>
<dbReference type="PANTHER" id="PTHR43213">
    <property type="entry name" value="BIFUNCTIONAL DTTP/UTP PYROPHOSPHATASE/METHYLTRANSFERASE PROTEIN-RELATED"/>
    <property type="match status" value="1"/>
</dbReference>
<dbReference type="Pfam" id="PF02545">
    <property type="entry name" value="Maf"/>
    <property type="match status" value="1"/>
</dbReference>
<dbReference type="PIRSF" id="PIRSF006305">
    <property type="entry name" value="Maf"/>
    <property type="match status" value="1"/>
</dbReference>
<dbReference type="SUPFAM" id="SSF52972">
    <property type="entry name" value="ITPase-like"/>
    <property type="match status" value="1"/>
</dbReference>
<feature type="chain" id="PRO_0000123047" description="7-methyl-GTP pyrophosphatase">
    <location>
        <begin position="1"/>
        <end position="192"/>
    </location>
</feature>
<feature type="active site" description="Proton acceptor" evidence="1">
    <location>
        <position position="69"/>
    </location>
</feature>
<feature type="site" description="Important for substrate specificity" evidence="1">
    <location>
        <position position="12"/>
    </location>
</feature>
<feature type="site" description="Important for substrate specificity" evidence="1">
    <location>
        <position position="70"/>
    </location>
</feature>
<feature type="site" description="Important for substrate specificity" evidence="1">
    <location>
        <position position="154"/>
    </location>
</feature>
<organism>
    <name type="scientific">Pseudomonas putida (strain ATCC 47054 / DSM 6125 / CFBP 8728 / NCIMB 11950 / KT2440)</name>
    <dbReference type="NCBI Taxonomy" id="160488"/>
    <lineage>
        <taxon>Bacteria</taxon>
        <taxon>Pseudomonadati</taxon>
        <taxon>Pseudomonadota</taxon>
        <taxon>Gammaproteobacteria</taxon>
        <taxon>Pseudomonadales</taxon>
        <taxon>Pseudomonadaceae</taxon>
        <taxon>Pseudomonas</taxon>
    </lineage>
</organism>
<gene>
    <name type="primary">maf-2</name>
    <name type="ordered locus">PP_1909</name>
</gene>
<evidence type="ECO:0000255" key="1">
    <source>
        <dbReference type="HAMAP-Rule" id="MF_00528"/>
    </source>
</evidence>
<evidence type="ECO:0000305" key="2"/>
<sequence>MLPLLLASSSAYRRELLARLHLPFTWASPDIDEQRLDGEPPVELVRRLARQKAEALAGSHPRHLIIGSDQVAVLGEQVLGKPHTFERACEQLLECSGQQVSFLTGLALLNSATGQCQVDCVPFTVTLRELSREQVERYVAAEQPLDCAGSFKAEGLGVSLFQSTHGCDATSLIGLPLIRLVDMLTKEGVMVP</sequence>
<reference key="1">
    <citation type="journal article" date="2002" name="Environ. Microbiol.">
        <title>Complete genome sequence and comparative analysis of the metabolically versatile Pseudomonas putida KT2440.</title>
        <authorList>
            <person name="Nelson K.E."/>
            <person name="Weinel C."/>
            <person name="Paulsen I.T."/>
            <person name="Dodson R.J."/>
            <person name="Hilbert H."/>
            <person name="Martins dos Santos V.A.P."/>
            <person name="Fouts D.E."/>
            <person name="Gill S.R."/>
            <person name="Pop M."/>
            <person name="Holmes M."/>
            <person name="Brinkac L.M."/>
            <person name="Beanan M.J."/>
            <person name="DeBoy R.T."/>
            <person name="Daugherty S.C."/>
            <person name="Kolonay J.F."/>
            <person name="Madupu R."/>
            <person name="Nelson W.C."/>
            <person name="White O."/>
            <person name="Peterson J.D."/>
            <person name="Khouri H.M."/>
            <person name="Hance I."/>
            <person name="Chris Lee P."/>
            <person name="Holtzapple E.K."/>
            <person name="Scanlan D."/>
            <person name="Tran K."/>
            <person name="Moazzez A."/>
            <person name="Utterback T.R."/>
            <person name="Rizzo M."/>
            <person name="Lee K."/>
            <person name="Kosack D."/>
            <person name="Moestl D."/>
            <person name="Wedler H."/>
            <person name="Lauber J."/>
            <person name="Stjepandic D."/>
            <person name="Hoheisel J."/>
            <person name="Straetz M."/>
            <person name="Heim S."/>
            <person name="Kiewitz C."/>
            <person name="Eisen J.A."/>
            <person name="Timmis K.N."/>
            <person name="Duesterhoeft A."/>
            <person name="Tuemmler B."/>
            <person name="Fraser C.M."/>
        </authorList>
    </citation>
    <scope>NUCLEOTIDE SEQUENCE [LARGE SCALE GENOMIC DNA]</scope>
    <source>
        <strain>ATCC 47054 / DSM 6125 / CFBP 8728 / NCIMB 11950 / KT2440</strain>
    </source>
</reference>
<accession>Q88LM1</accession>